<keyword id="KW-0249">Electron transport</keyword>
<keyword id="KW-0349">Heme</keyword>
<keyword id="KW-0408">Iron</keyword>
<keyword id="KW-0472">Membrane</keyword>
<keyword id="KW-0479">Metal-binding</keyword>
<keyword id="KW-0496">Mitochondrion</keyword>
<keyword id="KW-0999">Mitochondrion inner membrane</keyword>
<keyword id="KW-0679">Respiratory chain</keyword>
<keyword id="KW-0812">Transmembrane</keyword>
<keyword id="KW-1133">Transmembrane helix</keyword>
<keyword id="KW-0813">Transport</keyword>
<keyword id="KW-0830">Ubiquinone</keyword>
<organism>
    <name type="scientific">Sphyrna tiburo vespertina</name>
    <name type="common">Pacific bonnethead shark</name>
    <dbReference type="NCBI Taxonomy" id="7825"/>
    <lineage>
        <taxon>Eukaryota</taxon>
        <taxon>Metazoa</taxon>
        <taxon>Chordata</taxon>
        <taxon>Craniata</taxon>
        <taxon>Vertebrata</taxon>
        <taxon>Chondrichthyes</taxon>
        <taxon>Elasmobranchii</taxon>
        <taxon>Galeomorphii</taxon>
        <taxon>Galeoidea</taxon>
        <taxon>Carcharhiniformes</taxon>
        <taxon>Carcharhinidae</taxon>
        <taxon>Sphyrna</taxon>
    </lineage>
</organism>
<sequence>MAIFIRKTHPLLKIMNHALVDLPAPSNISLWWNFGSLLGLCLIIQILTGLFLAMHYTADVSMAFSSVVHICRDVNYGWLIRNIHANGASLFFICVYLHIARGLYYGSYLYKETWNIGVILLFLLMATAFVGYVLPWGQMSFWGATVITNLLSAFPYIGNTLVQWIWGGFSVDNATLTRFFAFHFLLPFLILALTIIHLLFLHETGSNNPLGINSDADKISFHPYFSYKDLLGFFVMIFFLTTLALFMPNLLGDAENFIPANPLVTPPHIKPEWYFLFAYAILRSIPNKLGGVLALLFSIFILMLVPLLHTSKQRSNIFRPLTQIFFWLLVANSIILTWIGGQPVEQPFITVGQVASISYFSLFLIIMPFASWCENKILSLN</sequence>
<protein>
    <recommendedName>
        <fullName>Cytochrome b</fullName>
    </recommendedName>
    <alternativeName>
        <fullName>Complex III subunit 3</fullName>
    </alternativeName>
    <alternativeName>
        <fullName>Complex III subunit III</fullName>
    </alternativeName>
    <alternativeName>
        <fullName>Cytochrome b-c1 complex subunit 3</fullName>
    </alternativeName>
    <alternativeName>
        <fullName>Ubiquinol-cytochrome-c reductase complex cytochrome b subunit</fullName>
    </alternativeName>
</protein>
<feature type="chain" id="PRO_0000061608" description="Cytochrome b">
    <location>
        <begin position="1"/>
        <end position="381"/>
    </location>
</feature>
<feature type="transmembrane region" description="Helical" evidence="2">
    <location>
        <begin position="34"/>
        <end position="54"/>
    </location>
</feature>
<feature type="transmembrane region" description="Helical" evidence="2">
    <location>
        <begin position="78"/>
        <end position="99"/>
    </location>
</feature>
<feature type="transmembrane region" description="Helical" evidence="2">
    <location>
        <begin position="114"/>
        <end position="134"/>
    </location>
</feature>
<feature type="transmembrane region" description="Helical" evidence="2">
    <location>
        <begin position="179"/>
        <end position="199"/>
    </location>
</feature>
<feature type="transmembrane region" description="Helical" evidence="2">
    <location>
        <begin position="227"/>
        <end position="247"/>
    </location>
</feature>
<feature type="transmembrane region" description="Helical" evidence="2">
    <location>
        <begin position="289"/>
        <end position="309"/>
    </location>
</feature>
<feature type="transmembrane region" description="Helical" evidence="2">
    <location>
        <begin position="321"/>
        <end position="341"/>
    </location>
</feature>
<feature type="transmembrane region" description="Helical" evidence="2">
    <location>
        <begin position="348"/>
        <end position="368"/>
    </location>
</feature>
<feature type="binding site" description="axial binding residue" evidence="2">
    <location>
        <position position="84"/>
    </location>
    <ligand>
        <name>heme b</name>
        <dbReference type="ChEBI" id="CHEBI:60344"/>
        <label>b562</label>
    </ligand>
    <ligandPart>
        <name>Fe</name>
        <dbReference type="ChEBI" id="CHEBI:18248"/>
    </ligandPart>
</feature>
<feature type="binding site" description="axial binding residue" evidence="2">
    <location>
        <position position="98"/>
    </location>
    <ligand>
        <name>heme b</name>
        <dbReference type="ChEBI" id="CHEBI:60344"/>
        <label>b566</label>
    </ligand>
    <ligandPart>
        <name>Fe</name>
        <dbReference type="ChEBI" id="CHEBI:18248"/>
    </ligandPart>
</feature>
<feature type="binding site" description="axial binding residue" evidence="2">
    <location>
        <position position="183"/>
    </location>
    <ligand>
        <name>heme b</name>
        <dbReference type="ChEBI" id="CHEBI:60344"/>
        <label>b562</label>
    </ligand>
    <ligandPart>
        <name>Fe</name>
        <dbReference type="ChEBI" id="CHEBI:18248"/>
    </ligandPart>
</feature>
<feature type="binding site" description="axial binding residue" evidence="2">
    <location>
        <position position="197"/>
    </location>
    <ligand>
        <name>heme b</name>
        <dbReference type="ChEBI" id="CHEBI:60344"/>
        <label>b566</label>
    </ligand>
    <ligandPart>
        <name>Fe</name>
        <dbReference type="ChEBI" id="CHEBI:18248"/>
    </ligandPart>
</feature>
<feature type="binding site" evidence="2">
    <location>
        <position position="202"/>
    </location>
    <ligand>
        <name>a ubiquinone</name>
        <dbReference type="ChEBI" id="CHEBI:16389"/>
    </ligand>
</feature>
<reference key="1">
    <citation type="journal article" date="1992" name="Nature">
        <title>Rates of mitochondrial DNA evolution in sharks are slow compared with mammals.</title>
        <authorList>
            <person name="Martin A.P."/>
            <person name="Naylor G.J.P."/>
            <person name="Palumbi S.R."/>
        </authorList>
    </citation>
    <scope>NUCLEOTIDE SEQUENCE [GENOMIC DNA]</scope>
</reference>
<evidence type="ECO:0000250" key="1"/>
<evidence type="ECO:0000250" key="2">
    <source>
        <dbReference type="UniProtKB" id="P00157"/>
    </source>
</evidence>
<evidence type="ECO:0000255" key="3">
    <source>
        <dbReference type="PROSITE-ProRule" id="PRU00967"/>
    </source>
</evidence>
<evidence type="ECO:0000255" key="4">
    <source>
        <dbReference type="PROSITE-ProRule" id="PRU00968"/>
    </source>
</evidence>
<comment type="function">
    <text evidence="2">Component of the ubiquinol-cytochrome c reductase complex (complex III or cytochrome b-c1 complex) that is part of the mitochondrial respiratory chain. The b-c1 complex mediates electron transfer from ubiquinol to cytochrome c. Contributes to the generation of a proton gradient across the mitochondrial membrane that is then used for ATP synthesis.</text>
</comment>
<comment type="cofactor">
    <cofactor evidence="2">
        <name>heme b</name>
        <dbReference type="ChEBI" id="CHEBI:60344"/>
    </cofactor>
    <text evidence="2">Binds 2 heme b groups non-covalently.</text>
</comment>
<comment type="subunit">
    <text evidence="2">The cytochrome bc1 complex contains 3 respiratory subunits (MT-CYB, CYC1 and UQCRFS1), 2 core proteins (UQCRC1 and UQCRC2) and probably 6 low-molecular weight proteins.</text>
</comment>
<comment type="subcellular location">
    <subcellularLocation>
        <location evidence="2">Mitochondrion inner membrane</location>
        <topology evidence="2">Multi-pass membrane protein</topology>
    </subcellularLocation>
</comment>
<comment type="miscellaneous">
    <text evidence="1">Heme 1 (or BL or b562) is low-potential and absorbs at about 562 nm, and heme 2 (or BH or b566) is high-potential and absorbs at about 566 nm.</text>
</comment>
<comment type="similarity">
    <text evidence="3 4">Belongs to the cytochrome b family.</text>
</comment>
<comment type="caution">
    <text evidence="2">The full-length protein contains only eight transmembrane helices, not nine as predicted by bioinformatics tools.</text>
</comment>
<name>CYB_SPHTV</name>
<accession>P34875</accession>
<geneLocation type="mitochondrion"/>
<gene>
    <name type="primary">mt-cyb</name>
    <name type="synonym">cob</name>
    <name type="synonym">cytb</name>
    <name type="synonym">mtcyb</name>
</gene>
<dbReference type="EMBL" id="L08043">
    <property type="protein sequence ID" value="AAA32069.1"/>
    <property type="molecule type" value="Genomic_DNA"/>
</dbReference>
<dbReference type="SMR" id="P34875"/>
<dbReference type="GO" id="GO:0005743">
    <property type="term" value="C:mitochondrial inner membrane"/>
    <property type="evidence" value="ECO:0007669"/>
    <property type="project" value="UniProtKB-SubCell"/>
</dbReference>
<dbReference type="GO" id="GO:0045275">
    <property type="term" value="C:respiratory chain complex III"/>
    <property type="evidence" value="ECO:0007669"/>
    <property type="project" value="InterPro"/>
</dbReference>
<dbReference type="GO" id="GO:0046872">
    <property type="term" value="F:metal ion binding"/>
    <property type="evidence" value="ECO:0007669"/>
    <property type="project" value="UniProtKB-KW"/>
</dbReference>
<dbReference type="GO" id="GO:0008121">
    <property type="term" value="F:ubiquinol-cytochrome-c reductase activity"/>
    <property type="evidence" value="ECO:0007669"/>
    <property type="project" value="InterPro"/>
</dbReference>
<dbReference type="GO" id="GO:0006122">
    <property type="term" value="P:mitochondrial electron transport, ubiquinol to cytochrome c"/>
    <property type="evidence" value="ECO:0007669"/>
    <property type="project" value="TreeGrafter"/>
</dbReference>
<dbReference type="CDD" id="cd00290">
    <property type="entry name" value="cytochrome_b_C"/>
    <property type="match status" value="1"/>
</dbReference>
<dbReference type="CDD" id="cd00284">
    <property type="entry name" value="Cytochrome_b_N"/>
    <property type="match status" value="1"/>
</dbReference>
<dbReference type="FunFam" id="1.20.810.10:FF:000002">
    <property type="entry name" value="Cytochrome b"/>
    <property type="match status" value="1"/>
</dbReference>
<dbReference type="Gene3D" id="1.20.810.10">
    <property type="entry name" value="Cytochrome Bc1 Complex, Chain C"/>
    <property type="match status" value="1"/>
</dbReference>
<dbReference type="InterPro" id="IPR005798">
    <property type="entry name" value="Cyt_b/b6_C"/>
</dbReference>
<dbReference type="InterPro" id="IPR036150">
    <property type="entry name" value="Cyt_b/b6_C_sf"/>
</dbReference>
<dbReference type="InterPro" id="IPR005797">
    <property type="entry name" value="Cyt_b/b6_N"/>
</dbReference>
<dbReference type="InterPro" id="IPR027387">
    <property type="entry name" value="Cytb/b6-like_sf"/>
</dbReference>
<dbReference type="InterPro" id="IPR030689">
    <property type="entry name" value="Cytochrome_b"/>
</dbReference>
<dbReference type="InterPro" id="IPR048260">
    <property type="entry name" value="Cytochrome_b_C_euk/bac"/>
</dbReference>
<dbReference type="InterPro" id="IPR048259">
    <property type="entry name" value="Cytochrome_b_N_euk/bac"/>
</dbReference>
<dbReference type="InterPro" id="IPR016174">
    <property type="entry name" value="Di-haem_cyt_TM"/>
</dbReference>
<dbReference type="PANTHER" id="PTHR19271">
    <property type="entry name" value="CYTOCHROME B"/>
    <property type="match status" value="1"/>
</dbReference>
<dbReference type="PANTHER" id="PTHR19271:SF16">
    <property type="entry name" value="CYTOCHROME B"/>
    <property type="match status" value="1"/>
</dbReference>
<dbReference type="Pfam" id="PF00032">
    <property type="entry name" value="Cytochrom_B_C"/>
    <property type="match status" value="1"/>
</dbReference>
<dbReference type="Pfam" id="PF00033">
    <property type="entry name" value="Cytochrome_B"/>
    <property type="match status" value="1"/>
</dbReference>
<dbReference type="PIRSF" id="PIRSF038885">
    <property type="entry name" value="COB"/>
    <property type="match status" value="1"/>
</dbReference>
<dbReference type="SUPFAM" id="SSF81648">
    <property type="entry name" value="a domain/subunit of cytochrome bc1 complex (Ubiquinol-cytochrome c reductase)"/>
    <property type="match status" value="1"/>
</dbReference>
<dbReference type="SUPFAM" id="SSF81342">
    <property type="entry name" value="Transmembrane di-heme cytochromes"/>
    <property type="match status" value="1"/>
</dbReference>
<dbReference type="PROSITE" id="PS51003">
    <property type="entry name" value="CYTB_CTER"/>
    <property type="match status" value="1"/>
</dbReference>
<dbReference type="PROSITE" id="PS51002">
    <property type="entry name" value="CYTB_NTER"/>
    <property type="match status" value="1"/>
</dbReference>
<proteinExistence type="inferred from homology"/>